<name>NADE_CAMJ8</name>
<protein>
    <recommendedName>
        <fullName evidence="1">NH(3)-dependent NAD(+) synthetase</fullName>
        <ecNumber evidence="1">6.3.1.5</ecNumber>
    </recommendedName>
</protein>
<accession>A8FLM3</accession>
<reference key="1">
    <citation type="journal article" date="2007" name="J. Bacteriol.">
        <title>The complete genome sequence of Campylobacter jejuni strain 81116 (NCTC11828).</title>
        <authorList>
            <person name="Pearson B.M."/>
            <person name="Gaskin D.J.H."/>
            <person name="Segers R.P.A.M."/>
            <person name="Wells J.M."/>
            <person name="Nuijten P.J.M."/>
            <person name="van Vliet A.H.M."/>
        </authorList>
    </citation>
    <scope>NUCLEOTIDE SEQUENCE [LARGE SCALE GENOMIC DNA]</scope>
    <source>
        <strain>81116 / NCTC 11828</strain>
    </source>
</reference>
<gene>
    <name evidence="1" type="primary">nadE</name>
    <name type="ordered locus">C8J_0761</name>
</gene>
<sequence>MDWQKITEKMCDFIQEKVKNSQSQGVVLGLSGGIDSALVATLCKRALKENVFALLMPTQISNKANLEDALRLCADLNLEYKIIEIQSILDAFIKQSENTTLVSLGNFAARIRMSLLYDYSALKNSLVIGTSNKSELLLGYGTIYGDLACAFNPIGSLYKSEIYTLAKYLNLHENFIKKAPSADLWENQSDEADLGFSYAKIDEGLKALETNDEKLLRTLDPSLIAMLKNRMQKNTFKGKMPEILEI</sequence>
<comment type="function">
    <text evidence="1">Catalyzes the ATP-dependent amidation of deamido-NAD to form NAD. Uses ammonia as a nitrogen source.</text>
</comment>
<comment type="catalytic activity">
    <reaction evidence="1">
        <text>deamido-NAD(+) + NH4(+) + ATP = AMP + diphosphate + NAD(+) + H(+)</text>
        <dbReference type="Rhea" id="RHEA:21188"/>
        <dbReference type="ChEBI" id="CHEBI:15378"/>
        <dbReference type="ChEBI" id="CHEBI:28938"/>
        <dbReference type="ChEBI" id="CHEBI:30616"/>
        <dbReference type="ChEBI" id="CHEBI:33019"/>
        <dbReference type="ChEBI" id="CHEBI:57540"/>
        <dbReference type="ChEBI" id="CHEBI:58437"/>
        <dbReference type="ChEBI" id="CHEBI:456215"/>
        <dbReference type="EC" id="6.3.1.5"/>
    </reaction>
</comment>
<comment type="pathway">
    <text evidence="1">Cofactor biosynthesis; NAD(+) biosynthesis; NAD(+) from deamido-NAD(+) (ammonia route): step 1/1.</text>
</comment>
<comment type="subunit">
    <text evidence="1">Homodimer.</text>
</comment>
<comment type="similarity">
    <text evidence="1">Belongs to the NAD synthetase family.</text>
</comment>
<evidence type="ECO:0000255" key="1">
    <source>
        <dbReference type="HAMAP-Rule" id="MF_00193"/>
    </source>
</evidence>
<proteinExistence type="inferred from homology"/>
<dbReference type="EC" id="6.3.1.5" evidence="1"/>
<dbReference type="EMBL" id="CP000814">
    <property type="protein sequence ID" value="ABV52360.1"/>
    <property type="molecule type" value="Genomic_DNA"/>
</dbReference>
<dbReference type="RefSeq" id="WP_002865990.1">
    <property type="nucleotide sequence ID" value="NC_009839.1"/>
</dbReference>
<dbReference type="SMR" id="A8FLM3"/>
<dbReference type="KEGG" id="cju:C8J_0761"/>
<dbReference type="HOGENOM" id="CLU_059327_1_2_7"/>
<dbReference type="UniPathway" id="UPA00253">
    <property type="reaction ID" value="UER00333"/>
</dbReference>
<dbReference type="GO" id="GO:0005737">
    <property type="term" value="C:cytoplasm"/>
    <property type="evidence" value="ECO:0007669"/>
    <property type="project" value="InterPro"/>
</dbReference>
<dbReference type="GO" id="GO:0005524">
    <property type="term" value="F:ATP binding"/>
    <property type="evidence" value="ECO:0007669"/>
    <property type="project" value="UniProtKB-UniRule"/>
</dbReference>
<dbReference type="GO" id="GO:0004359">
    <property type="term" value="F:glutaminase activity"/>
    <property type="evidence" value="ECO:0007669"/>
    <property type="project" value="InterPro"/>
</dbReference>
<dbReference type="GO" id="GO:0046872">
    <property type="term" value="F:metal ion binding"/>
    <property type="evidence" value="ECO:0007669"/>
    <property type="project" value="UniProtKB-KW"/>
</dbReference>
<dbReference type="GO" id="GO:0003952">
    <property type="term" value="F:NAD+ synthase (glutamine-hydrolyzing) activity"/>
    <property type="evidence" value="ECO:0007669"/>
    <property type="project" value="InterPro"/>
</dbReference>
<dbReference type="GO" id="GO:0008795">
    <property type="term" value="F:NAD+ synthase activity"/>
    <property type="evidence" value="ECO:0007669"/>
    <property type="project" value="UniProtKB-UniRule"/>
</dbReference>
<dbReference type="GO" id="GO:0009435">
    <property type="term" value="P:NAD biosynthetic process"/>
    <property type="evidence" value="ECO:0007669"/>
    <property type="project" value="UniProtKB-UniRule"/>
</dbReference>
<dbReference type="CDD" id="cd00553">
    <property type="entry name" value="NAD_synthase"/>
    <property type="match status" value="1"/>
</dbReference>
<dbReference type="FunFam" id="3.40.50.620:FF:000106">
    <property type="entry name" value="Glutamine-dependent NAD(+) synthetase"/>
    <property type="match status" value="1"/>
</dbReference>
<dbReference type="Gene3D" id="3.40.50.620">
    <property type="entry name" value="HUPs"/>
    <property type="match status" value="1"/>
</dbReference>
<dbReference type="HAMAP" id="MF_00193">
    <property type="entry name" value="NadE_ammonia_dep"/>
    <property type="match status" value="1"/>
</dbReference>
<dbReference type="InterPro" id="IPR022310">
    <property type="entry name" value="NAD/GMP_synthase"/>
</dbReference>
<dbReference type="InterPro" id="IPR003694">
    <property type="entry name" value="NAD_synthase"/>
</dbReference>
<dbReference type="InterPro" id="IPR022926">
    <property type="entry name" value="NH(3)-dep_NAD(+)_synth"/>
</dbReference>
<dbReference type="InterPro" id="IPR014729">
    <property type="entry name" value="Rossmann-like_a/b/a_fold"/>
</dbReference>
<dbReference type="NCBIfam" id="TIGR00552">
    <property type="entry name" value="nadE"/>
    <property type="match status" value="1"/>
</dbReference>
<dbReference type="NCBIfam" id="NF010587">
    <property type="entry name" value="PRK13980.1"/>
    <property type="match status" value="1"/>
</dbReference>
<dbReference type="PANTHER" id="PTHR23090:SF9">
    <property type="entry name" value="GLUTAMINE-DEPENDENT NAD(+) SYNTHETASE"/>
    <property type="match status" value="1"/>
</dbReference>
<dbReference type="PANTHER" id="PTHR23090">
    <property type="entry name" value="NH 3 /GLUTAMINE-DEPENDENT NAD + SYNTHETASE"/>
    <property type="match status" value="1"/>
</dbReference>
<dbReference type="Pfam" id="PF02540">
    <property type="entry name" value="NAD_synthase"/>
    <property type="match status" value="1"/>
</dbReference>
<dbReference type="SUPFAM" id="SSF52402">
    <property type="entry name" value="Adenine nucleotide alpha hydrolases-like"/>
    <property type="match status" value="1"/>
</dbReference>
<feature type="chain" id="PRO_1000077540" description="NH(3)-dependent NAD(+) synthetase">
    <location>
        <begin position="1"/>
        <end position="246"/>
    </location>
</feature>
<feature type="binding site" evidence="1">
    <location>
        <begin position="29"/>
        <end position="36"/>
    </location>
    <ligand>
        <name>ATP</name>
        <dbReference type="ChEBI" id="CHEBI:30616"/>
    </ligand>
</feature>
<feature type="binding site" evidence="1">
    <location>
        <position position="35"/>
    </location>
    <ligand>
        <name>Mg(2+)</name>
        <dbReference type="ChEBI" id="CHEBI:18420"/>
    </ligand>
</feature>
<feature type="binding site" evidence="1">
    <location>
        <position position="110"/>
    </location>
    <ligand>
        <name>deamido-NAD(+)</name>
        <dbReference type="ChEBI" id="CHEBI:58437"/>
    </ligand>
</feature>
<feature type="binding site" evidence="1">
    <location>
        <position position="130"/>
    </location>
    <ligand>
        <name>ATP</name>
        <dbReference type="ChEBI" id="CHEBI:30616"/>
    </ligand>
</feature>
<feature type="binding site" evidence="1">
    <location>
        <position position="135"/>
    </location>
    <ligand>
        <name>Mg(2+)</name>
        <dbReference type="ChEBI" id="CHEBI:18420"/>
    </ligand>
</feature>
<feature type="binding site" evidence="1">
    <location>
        <position position="159"/>
    </location>
    <ligand>
        <name>ATP</name>
        <dbReference type="ChEBI" id="CHEBI:30616"/>
    </ligand>
</feature>
<feature type="binding site" evidence="1">
    <location>
        <position position="181"/>
    </location>
    <ligand>
        <name>ATP</name>
        <dbReference type="ChEBI" id="CHEBI:30616"/>
    </ligand>
</feature>
<keyword id="KW-0067">ATP-binding</keyword>
<keyword id="KW-0436">Ligase</keyword>
<keyword id="KW-0460">Magnesium</keyword>
<keyword id="KW-0479">Metal-binding</keyword>
<keyword id="KW-0520">NAD</keyword>
<keyword id="KW-0547">Nucleotide-binding</keyword>
<organism>
    <name type="scientific">Campylobacter jejuni subsp. jejuni serotype O:6 (strain 81116 / NCTC 11828)</name>
    <dbReference type="NCBI Taxonomy" id="407148"/>
    <lineage>
        <taxon>Bacteria</taxon>
        <taxon>Pseudomonadati</taxon>
        <taxon>Campylobacterota</taxon>
        <taxon>Epsilonproteobacteria</taxon>
        <taxon>Campylobacterales</taxon>
        <taxon>Campylobacteraceae</taxon>
        <taxon>Campylobacter</taxon>
    </lineage>
</organism>